<evidence type="ECO:0000250" key="1">
    <source>
        <dbReference type="UniProtKB" id="P60301"/>
    </source>
</evidence>
<evidence type="ECO:0000250" key="2">
    <source>
        <dbReference type="UniProtKB" id="P60304"/>
    </source>
</evidence>
<evidence type="ECO:0000269" key="3">
    <source>
    </source>
</evidence>
<evidence type="ECO:0000305" key="4"/>
<keyword id="KW-0123">Cardiotoxin</keyword>
<keyword id="KW-0204">Cytolysis</keyword>
<keyword id="KW-0903">Direct protein sequencing</keyword>
<keyword id="KW-1015">Disulfide bond</keyword>
<keyword id="KW-0472">Membrane</keyword>
<keyword id="KW-0964">Secreted</keyword>
<keyword id="KW-1052">Target cell membrane</keyword>
<keyword id="KW-1053">Target membrane</keyword>
<keyword id="KW-0800">Toxin</keyword>
<feature type="chain" id="PRO_0000093483" description="Cytotoxin SP15c" evidence="3">
    <location>
        <begin position="1"/>
        <end position="60"/>
    </location>
</feature>
<feature type="disulfide bond" evidence="1">
    <location>
        <begin position="3"/>
        <end position="21"/>
    </location>
</feature>
<feature type="disulfide bond" evidence="1">
    <location>
        <begin position="14"/>
        <end position="38"/>
    </location>
</feature>
<feature type="disulfide bond" evidence="1">
    <location>
        <begin position="42"/>
        <end position="53"/>
    </location>
</feature>
<feature type="disulfide bond" evidence="1">
    <location>
        <begin position="54"/>
        <end position="59"/>
    </location>
</feature>
<proteinExistence type="evidence at protein level"/>
<comment type="function">
    <text evidence="1 2">Shows cytolytic activity on many different cells by forming pore in lipid membranes. In vivo, increases heart rate or kills the animal by cardiac arrest. In addition, it binds to heparin with high affinity, interacts with Kv channel-interacting protein 1 (KCNIP1) in a calcium-independent manner, and binds to integrin alpha-V/beta-3 (ITGAV/ITGB3) with moderate affinity.</text>
</comment>
<comment type="subunit">
    <text evidence="1">Monomer in solution; Homodimer and oligomer in the presence of negatively charged lipids forming a pore with a size ranging between 20 and 30 Angstroms.</text>
</comment>
<comment type="subcellular location">
    <subcellularLocation>
        <location evidence="3">Secreted</location>
    </subcellularLocation>
    <subcellularLocation>
        <location evidence="1">Target cell membrane</location>
    </subcellularLocation>
</comment>
<comment type="tissue specificity">
    <text evidence="4">Expressed by the venom gland.</text>
</comment>
<comment type="miscellaneous">
    <text evidence="4">Is classified as a P-type cytotoxin, since a proline residue stands at position 30 (Pro-31 in standard classification).</text>
</comment>
<comment type="similarity">
    <text evidence="4">Belongs to the three-finger toxin family. Short-chain subfamily. Type IA cytotoxin sub-subfamily.</text>
</comment>
<dbReference type="SMR" id="P60308"/>
<dbReference type="GO" id="GO:0005576">
    <property type="term" value="C:extracellular region"/>
    <property type="evidence" value="ECO:0007669"/>
    <property type="project" value="UniProtKB-SubCell"/>
</dbReference>
<dbReference type="GO" id="GO:0016020">
    <property type="term" value="C:membrane"/>
    <property type="evidence" value="ECO:0007669"/>
    <property type="project" value="UniProtKB-KW"/>
</dbReference>
<dbReference type="GO" id="GO:0044218">
    <property type="term" value="C:other organism cell membrane"/>
    <property type="evidence" value="ECO:0007669"/>
    <property type="project" value="UniProtKB-KW"/>
</dbReference>
<dbReference type="GO" id="GO:0090729">
    <property type="term" value="F:toxin activity"/>
    <property type="evidence" value="ECO:0007669"/>
    <property type="project" value="UniProtKB-KW"/>
</dbReference>
<dbReference type="GO" id="GO:0031640">
    <property type="term" value="P:killing of cells of another organism"/>
    <property type="evidence" value="ECO:0007669"/>
    <property type="project" value="UniProtKB-KW"/>
</dbReference>
<dbReference type="CDD" id="cd00206">
    <property type="entry name" value="TFP_snake_toxin"/>
    <property type="match status" value="1"/>
</dbReference>
<dbReference type="FunFam" id="2.10.60.10:FF:000024">
    <property type="entry name" value="Cytotoxin 1"/>
    <property type="match status" value="1"/>
</dbReference>
<dbReference type="Gene3D" id="2.10.60.10">
    <property type="entry name" value="CD59"/>
    <property type="match status" value="1"/>
</dbReference>
<dbReference type="InterPro" id="IPR003572">
    <property type="entry name" value="Cytotoxin_Cobra"/>
</dbReference>
<dbReference type="InterPro" id="IPR003571">
    <property type="entry name" value="Snake_3FTx"/>
</dbReference>
<dbReference type="InterPro" id="IPR045860">
    <property type="entry name" value="Snake_toxin-like_sf"/>
</dbReference>
<dbReference type="InterPro" id="IPR054131">
    <property type="entry name" value="Toxin_cobra-type"/>
</dbReference>
<dbReference type="Pfam" id="PF21947">
    <property type="entry name" value="Toxin_cobra-type"/>
    <property type="match status" value="1"/>
</dbReference>
<dbReference type="PRINTS" id="PR00282">
    <property type="entry name" value="CYTOTOXIN"/>
</dbReference>
<dbReference type="SUPFAM" id="SSF57302">
    <property type="entry name" value="Snake toxin-like"/>
    <property type="match status" value="1"/>
</dbReference>
<organism>
    <name type="scientific">Naja atra</name>
    <name type="common">Chinese cobra</name>
    <dbReference type="NCBI Taxonomy" id="8656"/>
    <lineage>
        <taxon>Eukaryota</taxon>
        <taxon>Metazoa</taxon>
        <taxon>Chordata</taxon>
        <taxon>Craniata</taxon>
        <taxon>Vertebrata</taxon>
        <taxon>Euteleostomi</taxon>
        <taxon>Lepidosauria</taxon>
        <taxon>Squamata</taxon>
        <taxon>Bifurcata</taxon>
        <taxon>Unidentata</taxon>
        <taxon>Episquamata</taxon>
        <taxon>Toxicofera</taxon>
        <taxon>Serpentes</taxon>
        <taxon>Colubroidea</taxon>
        <taxon>Elapidae</taxon>
        <taxon>Elapinae</taxon>
        <taxon>Naja</taxon>
    </lineage>
</organism>
<sequence length="60" mass="6755">LKCKKLVPLFSKTCPPGKNLCYKMFMVATPKVPVKRECIDVCPKSSLLVKYVCCNTDKCN</sequence>
<reference key="1">
    <citation type="journal article" date="2000" name="Toxicon">
        <title>The multiplicity of cardiotoxins from Naja naja atra (Taiwan cobra) venom.</title>
        <authorList>
            <person name="Chang L.-S."/>
            <person name="Huang H.-B."/>
            <person name="Lin S.-R."/>
        </authorList>
    </citation>
    <scope>PROTEIN SEQUENCE</scope>
    <scope>SUBCELLULAR LOCATION</scope>
    <source>
        <tissue>Venom</tissue>
    </source>
</reference>
<name>3SAFC_NAJAT</name>
<protein>
    <recommendedName>
        <fullName>Cytotoxin SP15c</fullName>
    </recommendedName>
</protein>
<accession>P60308</accession>